<protein>
    <recommendedName>
        <fullName>Suppressor of hydroxyurea sensitivity protein 2</fullName>
    </recommendedName>
</protein>
<keyword id="KW-0227">DNA damage</keyword>
<keyword id="KW-0233">DNA recombination</keyword>
<keyword id="KW-0234">DNA repair</keyword>
<keyword id="KW-0539">Nucleus</keyword>
<keyword id="KW-1185">Reference proteome</keyword>
<organism>
    <name type="scientific">Zygosaccharomyces rouxii (strain ATCC 2623 / CBS 732 / NBRC 1130 / NCYC 568 / NRRL Y-229)</name>
    <dbReference type="NCBI Taxonomy" id="559307"/>
    <lineage>
        <taxon>Eukaryota</taxon>
        <taxon>Fungi</taxon>
        <taxon>Dikarya</taxon>
        <taxon>Ascomycota</taxon>
        <taxon>Saccharomycotina</taxon>
        <taxon>Saccharomycetes</taxon>
        <taxon>Saccharomycetales</taxon>
        <taxon>Saccharomycetaceae</taxon>
        <taxon>Zygosaccharomyces</taxon>
    </lineage>
</organism>
<evidence type="ECO:0000250" key="1"/>
<evidence type="ECO:0000305" key="2"/>
<reference key="1">
    <citation type="journal article" date="2009" name="Genome Res.">
        <title>Comparative genomics of protoploid Saccharomycetaceae.</title>
        <authorList>
            <consortium name="The Genolevures Consortium"/>
            <person name="Souciet J.-L."/>
            <person name="Dujon B."/>
            <person name="Gaillardin C."/>
            <person name="Johnston M."/>
            <person name="Baret P.V."/>
            <person name="Cliften P."/>
            <person name="Sherman D.J."/>
            <person name="Weissenbach J."/>
            <person name="Westhof E."/>
            <person name="Wincker P."/>
            <person name="Jubin C."/>
            <person name="Poulain J."/>
            <person name="Barbe V."/>
            <person name="Segurens B."/>
            <person name="Artiguenave F."/>
            <person name="Anthouard V."/>
            <person name="Vacherie B."/>
            <person name="Val M.-E."/>
            <person name="Fulton R.S."/>
            <person name="Minx P."/>
            <person name="Wilson R."/>
            <person name="Durrens P."/>
            <person name="Jean G."/>
            <person name="Marck C."/>
            <person name="Martin T."/>
            <person name="Nikolski M."/>
            <person name="Rolland T."/>
            <person name="Seret M.-L."/>
            <person name="Casaregola S."/>
            <person name="Despons L."/>
            <person name="Fairhead C."/>
            <person name="Fischer G."/>
            <person name="Lafontaine I."/>
            <person name="Leh V."/>
            <person name="Lemaire M."/>
            <person name="de Montigny J."/>
            <person name="Neuveglise C."/>
            <person name="Thierry A."/>
            <person name="Blanc-Lenfle I."/>
            <person name="Bleykasten C."/>
            <person name="Diffels J."/>
            <person name="Fritsch E."/>
            <person name="Frangeul L."/>
            <person name="Goeffon A."/>
            <person name="Jauniaux N."/>
            <person name="Kachouri-Lafond R."/>
            <person name="Payen C."/>
            <person name="Potier S."/>
            <person name="Pribylova L."/>
            <person name="Ozanne C."/>
            <person name="Richard G.-F."/>
            <person name="Sacerdot C."/>
            <person name="Straub M.-L."/>
            <person name="Talla E."/>
        </authorList>
    </citation>
    <scope>NUCLEOTIDE SEQUENCE [LARGE SCALE GENOMIC DNA]</scope>
    <source>
        <strain>ATCC 2623 / CBS 732 / BCRC 21506 / NBRC 1130 / NCYC 568 / NRRL Y-229</strain>
    </source>
</reference>
<gene>
    <name type="primary">SHU2</name>
    <name type="ordered locus">ZYRO0B11066g</name>
</gene>
<dbReference type="EMBL" id="CU928174">
    <property type="protein sequence ID" value="CAR26491.1"/>
    <property type="molecule type" value="Genomic_DNA"/>
</dbReference>
<dbReference type="RefSeq" id="XP_002495424.1">
    <property type="nucleotide sequence ID" value="XM_002495379.1"/>
</dbReference>
<dbReference type="SMR" id="C5DRT0"/>
<dbReference type="FunCoup" id="C5DRT0">
    <property type="interactions" value="22"/>
</dbReference>
<dbReference type="STRING" id="559307.C5DRT0"/>
<dbReference type="GeneID" id="8202583"/>
<dbReference type="KEGG" id="zro:ZYRO0B11066g"/>
<dbReference type="HOGENOM" id="CLU_1115918_0_0_1"/>
<dbReference type="InParanoid" id="C5DRT0"/>
<dbReference type="Proteomes" id="UP000008536">
    <property type="component" value="Chromosome B"/>
</dbReference>
<dbReference type="GO" id="GO:0005634">
    <property type="term" value="C:nucleus"/>
    <property type="evidence" value="ECO:0007669"/>
    <property type="project" value="UniProtKB-SubCell"/>
</dbReference>
<dbReference type="GO" id="GO:0006310">
    <property type="term" value="P:DNA recombination"/>
    <property type="evidence" value="ECO:0007669"/>
    <property type="project" value="UniProtKB-KW"/>
</dbReference>
<dbReference type="GO" id="GO:0006281">
    <property type="term" value="P:DNA repair"/>
    <property type="evidence" value="ECO:0007669"/>
    <property type="project" value="UniProtKB-KW"/>
</dbReference>
<proteinExistence type="inferred from homology"/>
<feature type="chain" id="PRO_0000409747" description="Suppressor of hydroxyurea sensitivity protein 2">
    <location>
        <begin position="1"/>
        <end position="222"/>
    </location>
</feature>
<name>SHU2_ZYGRC</name>
<accession>C5DRT0</accession>
<sequence length="222" mass="25663">METSGEDGSAINHSELFSQLVNKDGQMNDTVASFLYYMFPRELFIRALSLIESCNMFIYVLVPSGVNDKNNQPLKFLEVSDLVNSIYDDSELHRLIVKPSDEDVPTYVDLNNWMCSCQEYTDLMLERLNQMEAGSLASSLLKDIDDSQRFQEDRFAQLDAHSLSMQRYVHCEKLNCPHLLAYSILLRSSTRTLQHFLEKGQILLIQINNMDEWLKLHINVVE</sequence>
<comment type="function">
    <text evidence="1">Plays a role in a RAD51/RAD54-dependent homologous recombination repair (HRR) pathway to repair MMS-induced lesions during S-phase. Required for error-free repair of spontaneous and induced DNA lesions to protect the genome from mutation (By similarity).</text>
</comment>
<comment type="subcellular location">
    <subcellularLocation>
        <location evidence="1">Nucleus</location>
    </subcellularLocation>
</comment>
<comment type="similarity">
    <text evidence="2">Belongs to the SHU2 family.</text>
</comment>